<reference key="1">
    <citation type="journal article" date="2004" name="Proc. Natl. Acad. Sci. U.S.A.">
        <title>Divergence of T2R chemosensory receptor families in humans, bonobos, and chimpanzees.</title>
        <authorList>
            <person name="Parry C.M."/>
            <person name="Erkner A."/>
            <person name="le Coutre J."/>
        </authorList>
    </citation>
    <scope>NUCLEOTIDE SEQUENCE [GENOMIC DNA]</scope>
</reference>
<evidence type="ECO:0000250" key="1"/>
<evidence type="ECO:0000255" key="2"/>
<evidence type="ECO:0000305" key="3"/>
<keyword id="KW-0297">G-protein coupled receptor</keyword>
<keyword id="KW-0325">Glycoprotein</keyword>
<keyword id="KW-0472">Membrane</keyword>
<keyword id="KW-0675">Receptor</keyword>
<keyword id="KW-1185">Reference proteome</keyword>
<keyword id="KW-0716">Sensory transduction</keyword>
<keyword id="KW-0919">Taste</keyword>
<keyword id="KW-0807">Transducer</keyword>
<keyword id="KW-0812">Transmembrane</keyword>
<keyword id="KW-1133">Transmembrane helix</keyword>
<organism>
    <name type="scientific">Pan paniscus</name>
    <name type="common">Pygmy chimpanzee</name>
    <name type="synonym">Bonobo</name>
    <dbReference type="NCBI Taxonomy" id="9597"/>
    <lineage>
        <taxon>Eukaryota</taxon>
        <taxon>Metazoa</taxon>
        <taxon>Chordata</taxon>
        <taxon>Craniata</taxon>
        <taxon>Vertebrata</taxon>
        <taxon>Euteleostomi</taxon>
        <taxon>Mammalia</taxon>
        <taxon>Eutheria</taxon>
        <taxon>Euarchontoglires</taxon>
        <taxon>Primates</taxon>
        <taxon>Haplorrhini</taxon>
        <taxon>Catarrhini</taxon>
        <taxon>Hominidae</taxon>
        <taxon>Pan</taxon>
    </lineage>
</organism>
<gene>
    <name type="primary">TAS2R42</name>
    <name type="synonym">TAS2R55</name>
</gene>
<comment type="function">
    <text evidence="1">Receptor that may play a role in the perception of bitterness and is gustducin-linked. May play a role in sensing the chemical composition of the gastrointestinal content. The activity of this receptor may stimulate alpha gustducin, mediate PLC-beta-2 activation and lead to the gating of TRPM5 (By similarity).</text>
</comment>
<comment type="subcellular location">
    <subcellularLocation>
        <location>Membrane</location>
        <topology>Multi-pass membrane protein</topology>
    </subcellularLocation>
</comment>
<comment type="miscellaneous">
    <text>Most taste cells may be activated by a limited number of bitter compounds; individual taste cells can discriminate among bitter stimuli.</text>
</comment>
<comment type="similarity">
    <text evidence="3">Belongs to the G-protein coupled receptor T2R family.</text>
</comment>
<accession>Q5Y4Z2</accession>
<protein>
    <recommendedName>
        <fullName>Taste receptor type 2 member 42</fullName>
        <shortName>T2R42</shortName>
    </recommendedName>
    <alternativeName>
        <fullName>T2R55</fullName>
    </alternativeName>
</protein>
<feature type="chain" id="PRO_0000082346" description="Taste receptor type 2 member 42">
    <location>
        <begin position="1"/>
        <end position="314"/>
    </location>
</feature>
<feature type="topological domain" description="Extracellular" evidence="2">
    <location>
        <begin position="1"/>
        <end position="7"/>
    </location>
</feature>
<feature type="transmembrane region" description="Helical; Name=1" evidence="2">
    <location>
        <begin position="8"/>
        <end position="28"/>
    </location>
</feature>
<feature type="topological domain" description="Cytoplasmic" evidence="2">
    <location>
        <begin position="29"/>
        <end position="50"/>
    </location>
</feature>
<feature type="transmembrane region" description="Helical; Name=2" evidence="2">
    <location>
        <begin position="51"/>
        <end position="71"/>
    </location>
</feature>
<feature type="topological domain" description="Extracellular" evidence="2">
    <location>
        <begin position="72"/>
        <end position="101"/>
    </location>
</feature>
<feature type="transmembrane region" description="Helical; Name=4" evidence="2">
    <location>
        <begin position="102"/>
        <end position="122"/>
    </location>
</feature>
<feature type="topological domain" description="Cytoplasmic" evidence="2">
    <location>
        <begin position="123"/>
        <end position="127"/>
    </location>
</feature>
<feature type="transmembrane region" description="Helical; Name=3" evidence="2">
    <location>
        <begin position="128"/>
        <end position="148"/>
    </location>
</feature>
<feature type="topological domain" description="Extracellular" evidence="2">
    <location>
        <begin position="149"/>
        <end position="187"/>
    </location>
</feature>
<feature type="transmembrane region" description="Helical; Name=5" evidence="2">
    <location>
        <begin position="188"/>
        <end position="208"/>
    </location>
</feature>
<feature type="topological domain" description="Cytoplasmic" evidence="2">
    <location>
        <begin position="209"/>
        <end position="238"/>
    </location>
</feature>
<feature type="transmembrane region" description="Helical; Name=6" evidence="2">
    <location>
        <begin position="239"/>
        <end position="259"/>
    </location>
</feature>
<feature type="topological domain" description="Extracellular" evidence="2">
    <location>
        <begin position="260"/>
        <end position="265"/>
    </location>
</feature>
<feature type="transmembrane region" description="Helical; Name=7" evidence="2">
    <location>
        <begin position="266"/>
        <end position="286"/>
    </location>
</feature>
<feature type="topological domain" description="Cytoplasmic" evidence="2">
    <location>
        <begin position="287"/>
        <end position="314"/>
    </location>
</feature>
<feature type="glycosylation site" description="N-linked (GlcNAc...) asparagine" evidence="2">
    <location>
        <position position="163"/>
    </location>
</feature>
<name>T2R42_PANPA</name>
<proteinExistence type="inferred from homology"/>
<dbReference type="EMBL" id="AY677155">
    <property type="protein sequence ID" value="AAV28583.1"/>
    <property type="molecule type" value="Genomic_DNA"/>
</dbReference>
<dbReference type="SMR" id="Q5Y4Z2"/>
<dbReference type="STRING" id="9597.ENSPPAP00000006728"/>
<dbReference type="GlyCosmos" id="Q5Y4Z2">
    <property type="glycosylation" value="1 site, No reported glycans"/>
</dbReference>
<dbReference type="eggNOG" id="ENOG502TCTX">
    <property type="taxonomic scope" value="Eukaryota"/>
</dbReference>
<dbReference type="Proteomes" id="UP000240080">
    <property type="component" value="Unplaced"/>
</dbReference>
<dbReference type="GO" id="GO:0005886">
    <property type="term" value="C:plasma membrane"/>
    <property type="evidence" value="ECO:0007669"/>
    <property type="project" value="UniProtKB-ARBA"/>
</dbReference>
<dbReference type="GO" id="GO:0033038">
    <property type="term" value="F:bitter taste receptor activity"/>
    <property type="evidence" value="ECO:0007669"/>
    <property type="project" value="InterPro"/>
</dbReference>
<dbReference type="GO" id="GO:0004930">
    <property type="term" value="F:G protein-coupled receptor activity"/>
    <property type="evidence" value="ECO:0007669"/>
    <property type="project" value="UniProtKB-KW"/>
</dbReference>
<dbReference type="CDD" id="cd15024">
    <property type="entry name" value="7tm_TAS2R42"/>
    <property type="match status" value="1"/>
</dbReference>
<dbReference type="FunFam" id="1.20.1070.10:FF:000042">
    <property type="entry name" value="Taste receptor type 2 member 7"/>
    <property type="match status" value="1"/>
</dbReference>
<dbReference type="Gene3D" id="1.20.1070.10">
    <property type="entry name" value="Rhodopsin 7-helix transmembrane proteins"/>
    <property type="match status" value="1"/>
</dbReference>
<dbReference type="InterPro" id="IPR007960">
    <property type="entry name" value="TAS2R"/>
</dbReference>
<dbReference type="PANTHER" id="PTHR11394">
    <property type="entry name" value="TASTE RECEPTOR TYPE 2"/>
    <property type="match status" value="1"/>
</dbReference>
<dbReference type="PANTHER" id="PTHR11394:SF70">
    <property type="entry name" value="TASTE RECEPTOR TYPE 2 MEMBER 42"/>
    <property type="match status" value="1"/>
</dbReference>
<dbReference type="Pfam" id="PF05296">
    <property type="entry name" value="TAS2R"/>
    <property type="match status" value="1"/>
</dbReference>
<dbReference type="SUPFAM" id="SSF81321">
    <property type="entry name" value="Family A G protein-coupled receptor-like"/>
    <property type="match status" value="1"/>
</dbReference>
<sequence>MATELDKIFLILEIAEFIIGMLGNVFIGLVNCSEGIKNQKVFSADFILTCLAISTIGQLFVILFDSFLVGLASHLYTTYRLGKPVIMLWHMTNHLTTWLATCLSIFYFFKIAHFPHSLFLWLRWRMNGMIVMLLILSLFLLIFDSLVLEIFIDISLNIIDKSNLTLYLDESKTLYDKLSILKTLLSLTSFIPFSLSLTSLLFFFLSLVRHTRNLKLSSLGSRDSSTEAHRRAMKMVMSFLFLFIVHFFSLQVANWIFFMLWNNKYIKFAMLALNAFPSCHSFILILGNSKLRQTAVRLLWHLRNYTKTPNALPL</sequence>